<name>RADA_THEKO</name>
<gene>
    <name type="primary">radA</name>
    <name type="ordered locus">TK1899</name>
</gene>
<comment type="function">
    <text evidence="1">Involved in DNA repair and in homologous recombination. Binds and assemble on single-stranded DNA to form a nucleoprotein filament. Hydrolyzes ATP in a ssDNA-dependent manner and promotes DNA strand exchange between homologous DNA molecules (By similarity).</text>
</comment>
<comment type="PTM">
    <text evidence="4">This protein undergoes a protein self splicing that involves a post-translational excision of the intervening region (intein) followed by peptide ligation.</text>
</comment>
<comment type="miscellaneous">
    <text>The intein interrupts the ATP-binding site.</text>
</comment>
<comment type="similarity">
    <text evidence="4">Belongs to the eukaryotic RecA-like protein family.</text>
</comment>
<feature type="chain" id="PRO_0000030164" description="DNA repair and recombination protein RadA, 1st part" evidence="2">
    <location>
        <begin position="1"/>
        <end position="149"/>
    </location>
</feature>
<feature type="chain" id="PRO_0000030165" description="Pko RadA intein" evidence="2">
    <location>
        <begin position="150"/>
        <end position="631"/>
    </location>
</feature>
<feature type="chain" id="PRO_0000030166" description="DNA repair and recombination protein RadA, 2nd part" evidence="2">
    <location>
        <begin position="632"/>
        <end position="836"/>
    </location>
</feature>
<feature type="domain" description="DOD-type homing endonuclease">
    <location>
        <begin position="285"/>
        <end position="410"/>
    </location>
</feature>
<feature type="region of interest" description="Disordered" evidence="3">
    <location>
        <begin position="15"/>
        <end position="41"/>
    </location>
</feature>
<feature type="compositionally biased region" description="Acidic residues" evidence="3">
    <location>
        <begin position="15"/>
        <end position="24"/>
    </location>
</feature>
<feature type="compositionally biased region" description="Basic and acidic residues" evidence="3">
    <location>
        <begin position="31"/>
        <end position="41"/>
    </location>
</feature>
<accession>Q5JET4</accession>
<proteinExistence type="inferred from homology"/>
<dbReference type="EMBL" id="AP006878">
    <property type="protein sequence ID" value="BAD86088.1"/>
    <property type="molecule type" value="Genomic_DNA"/>
</dbReference>
<dbReference type="RefSeq" id="WP_011250850.1">
    <property type="nucleotide sequence ID" value="NC_006624.1"/>
</dbReference>
<dbReference type="SMR" id="Q5JET4"/>
<dbReference type="IntAct" id="Q5JET4">
    <property type="interactions" value="1"/>
</dbReference>
<dbReference type="MINT" id="Q5JET4"/>
<dbReference type="STRING" id="69014.TK1899"/>
<dbReference type="EnsemblBacteria" id="BAD86088">
    <property type="protein sequence ID" value="BAD86088"/>
    <property type="gene ID" value="TK1899"/>
</dbReference>
<dbReference type="GeneID" id="78448430"/>
<dbReference type="KEGG" id="tko:TK1899"/>
<dbReference type="PATRIC" id="fig|69014.16.peg.1857"/>
<dbReference type="eggNOG" id="arCOG00415">
    <property type="taxonomic scope" value="Archaea"/>
</dbReference>
<dbReference type="eggNOG" id="arCOG03154">
    <property type="taxonomic scope" value="Archaea"/>
</dbReference>
<dbReference type="HOGENOM" id="CLU_349728_0_0_2"/>
<dbReference type="InParanoid" id="Q5JET4"/>
<dbReference type="OrthoDB" id="31129at2157"/>
<dbReference type="PhylomeDB" id="Q5JET4"/>
<dbReference type="Proteomes" id="UP000000536">
    <property type="component" value="Chromosome"/>
</dbReference>
<dbReference type="GO" id="GO:0005524">
    <property type="term" value="F:ATP binding"/>
    <property type="evidence" value="ECO:0007669"/>
    <property type="project" value="UniProtKB-UniRule"/>
</dbReference>
<dbReference type="GO" id="GO:0140664">
    <property type="term" value="F:ATP-dependent DNA damage sensor activity"/>
    <property type="evidence" value="ECO:0007669"/>
    <property type="project" value="InterPro"/>
</dbReference>
<dbReference type="GO" id="GO:0003684">
    <property type="term" value="F:damaged DNA binding"/>
    <property type="evidence" value="ECO:0007669"/>
    <property type="project" value="UniProtKB-UniRule"/>
</dbReference>
<dbReference type="GO" id="GO:0004519">
    <property type="term" value="F:endonuclease activity"/>
    <property type="evidence" value="ECO:0007669"/>
    <property type="project" value="UniProtKB-KW"/>
</dbReference>
<dbReference type="GO" id="GO:0006281">
    <property type="term" value="P:DNA repair"/>
    <property type="evidence" value="ECO:0007669"/>
    <property type="project" value="UniProtKB-UniRule"/>
</dbReference>
<dbReference type="GO" id="GO:0016539">
    <property type="term" value="P:intein-mediated protein splicing"/>
    <property type="evidence" value="ECO:0007669"/>
    <property type="project" value="InterPro"/>
</dbReference>
<dbReference type="GO" id="GO:0006314">
    <property type="term" value="P:intron homing"/>
    <property type="evidence" value="ECO:0007669"/>
    <property type="project" value="UniProtKB-KW"/>
</dbReference>
<dbReference type="CDD" id="cd19515">
    <property type="entry name" value="archRadA"/>
    <property type="match status" value="1"/>
</dbReference>
<dbReference type="CDD" id="cd00081">
    <property type="entry name" value="Hint"/>
    <property type="match status" value="2"/>
</dbReference>
<dbReference type="FunFam" id="3.40.50.300:FF:002052">
    <property type="entry name" value="DNA repair protein RAD51 homolog"/>
    <property type="match status" value="1"/>
</dbReference>
<dbReference type="Gene3D" id="1.10.150.20">
    <property type="entry name" value="5' to 3' exonuclease, C-terminal subdomain"/>
    <property type="match status" value="1"/>
</dbReference>
<dbReference type="Gene3D" id="2.170.16.10">
    <property type="entry name" value="Hedgehog/Intein (Hint) domain"/>
    <property type="match status" value="2"/>
</dbReference>
<dbReference type="Gene3D" id="3.10.28.10">
    <property type="entry name" value="Homing endonucleases"/>
    <property type="match status" value="1"/>
</dbReference>
<dbReference type="Gene3D" id="3.40.50.300">
    <property type="entry name" value="P-loop containing nucleotide triphosphate hydrolases"/>
    <property type="match status" value="2"/>
</dbReference>
<dbReference type="HAMAP" id="MF_00348">
    <property type="entry name" value="RadA_arch"/>
    <property type="match status" value="1"/>
</dbReference>
<dbReference type="InterPro" id="IPR013632">
    <property type="entry name" value="DNA_recomb/repair_Rad51_C"/>
</dbReference>
<dbReference type="InterPro" id="IPR011938">
    <property type="entry name" value="DNA_recomb/repair_RadA"/>
</dbReference>
<dbReference type="InterPro" id="IPR010995">
    <property type="entry name" value="DNA_repair_Rad51/TF_NusA_a-hlx"/>
</dbReference>
<dbReference type="InterPro" id="IPR003586">
    <property type="entry name" value="Hint_dom_C"/>
</dbReference>
<dbReference type="InterPro" id="IPR003587">
    <property type="entry name" value="Hint_dom_N"/>
</dbReference>
<dbReference type="InterPro" id="IPR036844">
    <property type="entry name" value="Hint_dom_sf"/>
</dbReference>
<dbReference type="InterPro" id="IPR003583">
    <property type="entry name" value="Hlx-hairpin-Hlx_DNA-bd_motif"/>
</dbReference>
<dbReference type="InterPro" id="IPR027434">
    <property type="entry name" value="Homing_endonucl"/>
</dbReference>
<dbReference type="InterPro" id="IPR006142">
    <property type="entry name" value="INTEIN"/>
</dbReference>
<dbReference type="InterPro" id="IPR030934">
    <property type="entry name" value="Intein_C"/>
</dbReference>
<dbReference type="InterPro" id="IPR004042">
    <property type="entry name" value="Intein_endonuc_central"/>
</dbReference>
<dbReference type="InterPro" id="IPR006141">
    <property type="entry name" value="Intein_N"/>
</dbReference>
<dbReference type="InterPro" id="IPR004860">
    <property type="entry name" value="LAGLIDADG_dom"/>
</dbReference>
<dbReference type="InterPro" id="IPR027417">
    <property type="entry name" value="P-loop_NTPase"/>
</dbReference>
<dbReference type="InterPro" id="IPR020588">
    <property type="entry name" value="RecA_ATP-bd"/>
</dbReference>
<dbReference type="InterPro" id="IPR020587">
    <property type="entry name" value="RecA_monomer-monomer_interface"/>
</dbReference>
<dbReference type="NCBIfam" id="TIGR01443">
    <property type="entry name" value="intein_Cterm"/>
    <property type="match status" value="1"/>
</dbReference>
<dbReference type="NCBIfam" id="TIGR01445">
    <property type="entry name" value="intein_Nterm"/>
    <property type="match status" value="1"/>
</dbReference>
<dbReference type="NCBIfam" id="NF003301">
    <property type="entry name" value="PRK04301.1"/>
    <property type="match status" value="1"/>
</dbReference>
<dbReference type="NCBIfam" id="TIGR02236">
    <property type="entry name" value="recomb_radA"/>
    <property type="match status" value="1"/>
</dbReference>
<dbReference type="PANTHER" id="PTHR22942:SF30">
    <property type="entry name" value="MEIOTIC RECOMBINATION PROTEIN DMC1_LIM15 HOMOLOG"/>
    <property type="match status" value="1"/>
</dbReference>
<dbReference type="PANTHER" id="PTHR22942">
    <property type="entry name" value="RECA/RAD51/RADA DNA STRAND-PAIRING FAMILY MEMBER"/>
    <property type="match status" value="1"/>
</dbReference>
<dbReference type="Pfam" id="PF14520">
    <property type="entry name" value="HHH_5"/>
    <property type="match status" value="1"/>
</dbReference>
<dbReference type="Pfam" id="PF14890">
    <property type="entry name" value="Intein_splicing"/>
    <property type="match status" value="1"/>
</dbReference>
<dbReference type="Pfam" id="PF14528">
    <property type="entry name" value="LAGLIDADG_3"/>
    <property type="match status" value="1"/>
</dbReference>
<dbReference type="Pfam" id="PF08423">
    <property type="entry name" value="Rad51"/>
    <property type="match status" value="2"/>
</dbReference>
<dbReference type="PRINTS" id="PR00379">
    <property type="entry name" value="INTEIN"/>
</dbReference>
<dbReference type="SMART" id="SM00278">
    <property type="entry name" value="HhH1"/>
    <property type="match status" value="2"/>
</dbReference>
<dbReference type="SMART" id="SM00305">
    <property type="entry name" value="HintC"/>
    <property type="match status" value="1"/>
</dbReference>
<dbReference type="SMART" id="SM00306">
    <property type="entry name" value="HintN"/>
    <property type="match status" value="1"/>
</dbReference>
<dbReference type="SUPFAM" id="SSF51294">
    <property type="entry name" value="Hedgehog/intein (Hint) domain"/>
    <property type="match status" value="1"/>
</dbReference>
<dbReference type="SUPFAM" id="SSF55608">
    <property type="entry name" value="Homing endonucleases"/>
    <property type="match status" value="1"/>
</dbReference>
<dbReference type="SUPFAM" id="SSF52540">
    <property type="entry name" value="P-loop containing nucleoside triphosphate hydrolases"/>
    <property type="match status" value="2"/>
</dbReference>
<dbReference type="SUPFAM" id="SSF47794">
    <property type="entry name" value="Rad51 N-terminal domain-like"/>
    <property type="match status" value="1"/>
</dbReference>
<dbReference type="PROSITE" id="PS50818">
    <property type="entry name" value="INTEIN_C_TER"/>
    <property type="match status" value="1"/>
</dbReference>
<dbReference type="PROSITE" id="PS50819">
    <property type="entry name" value="INTEIN_ENDONUCLEASE"/>
    <property type="match status" value="1"/>
</dbReference>
<dbReference type="PROSITE" id="PS50817">
    <property type="entry name" value="INTEIN_N_TER"/>
    <property type="match status" value="1"/>
</dbReference>
<dbReference type="PROSITE" id="PS50162">
    <property type="entry name" value="RECA_2"/>
    <property type="match status" value="2"/>
</dbReference>
<dbReference type="PROSITE" id="PS50163">
    <property type="entry name" value="RECA_3"/>
    <property type="match status" value="1"/>
</dbReference>
<sequence>MARKKKVEDEVKELEEFEELDVEESLSSSDKQSKPEKKISALEDLPGVGPATAEKLREAGYDTIEAIAVASPLELKEIAGISEGAALKIIQAAREAANIGTFMRADEYMKRRTTIGKISTGSKALDKLLGGGIETQAITEVFGEFGSGKCFAKDTKVYYENDTLVHFESIEDMYHKYASLGREVPFDNGYAVPLETVSVYTFDPKTGEVKRTKASYIYREKVEKLAEIRLSNGYLLRITLLHPVLVFRNGLQWVPAGMIKPGDLIVGIRSVPANAATIEESEAYFLGLFVAEGTSNPLSITTGSEELKDFIVSFIEDHDGYTPTVEVRRGLYRILFRKKTAEWLGELATSNASTKVVPERVLNAGESAIAAFLAGYLDGDGYLTESIVELVTKSRELADGLVFLLKRLGITPRISQKTIEGSVYYRIYITGEDRKTFEKVLEKSRIKPGEMNEGGVGRYPPALGKFLGKLYSEFRLPKRDNETAYHILTRSRNVWFTEKTLSRIEEYFREALEKLSEARKALEMGDKPELPFPWTAITKYGFTDRQVANYRTRGLPKRPELKEKVVSALLKEIERLEGVAKLALETIELARRLEFHEVSSVEVVDYNDWVYDLVIPETHNFIAPNGLVLHNTQLAHTLAVMVQKPPEEGGLGGSVIWIDTENTFRPERIKQIAENRGLDPEETLKNIYVARAFNSNHQMLLVEKAEEIIKEKAESDRPVKLLVVDSLMAHFRAEYVGRGTLAERQQKLAKHLADLHRLADLYDIAVFVTNQVQAKPDAFFGDPTRPVGGHILAHSATLRVYLRKGKAGKRVARLIDSPHLPEGEAVFRITEKGVED</sequence>
<protein>
    <recommendedName>
        <fullName>DNA repair and recombination protein RadA</fullName>
    </recommendedName>
    <component>
        <recommendedName>
            <fullName>Pko RadA intein</fullName>
        </recommendedName>
    </component>
</protein>
<reference key="1">
    <citation type="journal article" date="2005" name="Genome Res.">
        <title>Complete genome sequence of the hyperthermophilic archaeon Thermococcus kodakaraensis KOD1 and comparison with Pyrococcus genomes.</title>
        <authorList>
            <person name="Fukui T."/>
            <person name="Atomi H."/>
            <person name="Kanai T."/>
            <person name="Matsumi R."/>
            <person name="Fujiwara S."/>
            <person name="Imanaka T."/>
        </authorList>
    </citation>
    <scope>NUCLEOTIDE SEQUENCE [LARGE SCALE GENOMIC DNA]</scope>
    <source>
        <strain>ATCC BAA-918 / JCM 12380 / KOD1</strain>
    </source>
</reference>
<evidence type="ECO:0000250" key="1"/>
<evidence type="ECO:0000255" key="2"/>
<evidence type="ECO:0000256" key="3">
    <source>
        <dbReference type="SAM" id="MobiDB-lite"/>
    </source>
</evidence>
<evidence type="ECO:0000305" key="4"/>
<keyword id="KW-0067">ATP-binding</keyword>
<keyword id="KW-0068">Autocatalytic cleavage</keyword>
<keyword id="KW-0227">DNA damage</keyword>
<keyword id="KW-0233">DNA recombination</keyword>
<keyword id="KW-0238">DNA-binding</keyword>
<keyword id="KW-0255">Endonuclease</keyword>
<keyword id="KW-0378">Hydrolase</keyword>
<keyword id="KW-0404">Intron homing</keyword>
<keyword id="KW-0540">Nuclease</keyword>
<keyword id="KW-0547">Nucleotide-binding</keyword>
<keyword id="KW-0651">Protein splicing</keyword>
<keyword id="KW-1185">Reference proteome</keyword>
<organism>
    <name type="scientific">Thermococcus kodakarensis (strain ATCC BAA-918 / JCM 12380 / KOD1)</name>
    <name type="common">Pyrococcus kodakaraensis (strain KOD1)</name>
    <dbReference type="NCBI Taxonomy" id="69014"/>
    <lineage>
        <taxon>Archaea</taxon>
        <taxon>Methanobacteriati</taxon>
        <taxon>Methanobacteriota</taxon>
        <taxon>Thermococci</taxon>
        <taxon>Thermococcales</taxon>
        <taxon>Thermococcaceae</taxon>
        <taxon>Thermococcus</taxon>
    </lineage>
</organism>